<evidence type="ECO:0000250" key="1"/>
<evidence type="ECO:0000255" key="2"/>
<evidence type="ECO:0000269" key="3">
    <source>
    </source>
</evidence>
<evidence type="ECO:0000305" key="4"/>
<sequence length="141" mass="15028">MERLQGLLLWLLLSPSVVWASRGPLRPLCRPVNATLAAENEFCPVCITFTTSICAGYCPSMVRVLPAALPPVPQPVCTYRELAFASVRLPGCPPGVDPIVSFPVALSCRCGPCRLSSSDCGGPRTQPMACDLPHLPGLLLL</sequence>
<gene>
    <name type="primary">Lhb</name>
</gene>
<name>LSHB_MOUSE</name>
<feature type="signal peptide" evidence="1">
    <location>
        <begin position="1"/>
        <end position="20"/>
    </location>
</feature>
<feature type="chain" id="PRO_0000011730" description="Lutropin subunit beta">
    <location>
        <begin position="21"/>
        <end position="141"/>
    </location>
</feature>
<feature type="glycosylation site" description="N-linked (GlcNAc...) asparagine" evidence="2">
    <location>
        <position position="33"/>
    </location>
</feature>
<feature type="disulfide bond" evidence="1">
    <location>
        <begin position="29"/>
        <end position="77"/>
    </location>
</feature>
<feature type="disulfide bond" evidence="1">
    <location>
        <begin position="43"/>
        <end position="92"/>
    </location>
</feature>
<feature type="disulfide bond" evidence="1">
    <location>
        <begin position="54"/>
        <end position="108"/>
    </location>
</feature>
<feature type="disulfide bond" evidence="1">
    <location>
        <begin position="58"/>
        <end position="110"/>
    </location>
</feature>
<feature type="disulfide bond" evidence="1">
    <location>
        <begin position="113"/>
        <end position="120"/>
    </location>
</feature>
<feature type="sequence conflict" description="In Ref. 2; CAA71445." evidence="4" ref="2">
    <original>A</original>
    <variation>R</variation>
    <location>
        <position position="83"/>
    </location>
</feature>
<reference key="1">
    <citation type="journal article" date="1995" name="Gene">
        <title>Cloning of the mouse gonadotropin beta-subunit-encoding genes, II. Structure of the luteinizing hormone beta-subunit-encoding genes.</title>
        <authorList>
            <person name="Kumar T.R."/>
            <person name="Matzuk M.M."/>
        </authorList>
    </citation>
    <scope>NUCLEOTIDE SEQUENCE [GENOMIC DNA]</scope>
    <source>
        <strain>129/Sv</strain>
    </source>
</reference>
<reference key="2">
    <citation type="submission" date="1997-01" db="EMBL/GenBank/DDBJ databases">
        <authorList>
            <person name="Brown P."/>
            <person name="Brooks J."/>
            <person name="McNeilly J.R."/>
            <person name="McNeilly A.S."/>
        </authorList>
    </citation>
    <scope>NUCLEOTIDE SEQUENCE [MRNA] OF 18-122</scope>
    <source>
        <strain>C57BL/6 X CBA</strain>
        <tissue>Pituitary anterior lobe</tissue>
    </source>
</reference>
<reference key="3">
    <citation type="journal article" date="2013" name="Mol. Endocrinol.">
        <title>Msx1 homeodomain protein represses the alphaGSU and GnRH receptor genes during gonadotrope development.</title>
        <authorList>
            <person name="Xie H."/>
            <person name="Cherrington B.D."/>
            <person name="Meadows J.D."/>
            <person name="Witham E.A."/>
            <person name="Mellon P.L."/>
        </authorList>
    </citation>
    <scope>DEVELOPMENTAL STAGE</scope>
</reference>
<proteinExistence type="evidence at transcript level"/>
<protein>
    <recommendedName>
        <fullName>Lutropin subunit beta</fullName>
        <shortName>Lutropin beta chain</shortName>
    </recommendedName>
    <alternativeName>
        <fullName>Luteinizing hormone subunit beta</fullName>
        <shortName>LH-B</shortName>
        <shortName>LSH-B</shortName>
        <shortName>LSH-beta</shortName>
    </alternativeName>
</protein>
<accession>O09108</accession>
<accession>Q60844</accession>
<comment type="function">
    <text>Promotes spermatogenesis and ovulation by stimulating the testes and ovaries to synthesize steroids.</text>
</comment>
<comment type="subunit">
    <text>Heterodimer of a common alpha chain and a unique beta chain which confers biological specificity to thyrotropin, lutropin, follitropin and gonadotropin.</text>
</comment>
<comment type="subcellular location">
    <subcellularLocation>
        <location>Secreted</location>
    </subcellularLocation>
</comment>
<comment type="developmental stage">
    <text evidence="3">Expressed in the developing pituitary gland at 18.5 dpc.</text>
</comment>
<comment type="similarity">
    <text evidence="4">Belongs to the glycoprotein hormones subunit beta family.</text>
</comment>
<organism>
    <name type="scientific">Mus musculus</name>
    <name type="common">Mouse</name>
    <dbReference type="NCBI Taxonomy" id="10090"/>
    <lineage>
        <taxon>Eukaryota</taxon>
        <taxon>Metazoa</taxon>
        <taxon>Chordata</taxon>
        <taxon>Craniata</taxon>
        <taxon>Vertebrata</taxon>
        <taxon>Euteleostomi</taxon>
        <taxon>Mammalia</taxon>
        <taxon>Eutheria</taxon>
        <taxon>Euarchontoglires</taxon>
        <taxon>Glires</taxon>
        <taxon>Rodentia</taxon>
        <taxon>Myomorpha</taxon>
        <taxon>Muroidea</taxon>
        <taxon>Muridae</taxon>
        <taxon>Murinae</taxon>
        <taxon>Mus</taxon>
        <taxon>Mus</taxon>
    </lineage>
</organism>
<dbReference type="EMBL" id="U25145">
    <property type="protein sequence ID" value="AAA92841.1"/>
    <property type="molecule type" value="Genomic_DNA"/>
</dbReference>
<dbReference type="EMBL" id="Y10418">
    <property type="protein sequence ID" value="CAA71445.1"/>
    <property type="molecule type" value="mRNA"/>
</dbReference>
<dbReference type="CCDS" id="CCDS21242.1"/>
<dbReference type="PIR" id="JC4527">
    <property type="entry name" value="JC4527"/>
</dbReference>
<dbReference type="SMR" id="O09108"/>
<dbReference type="FunCoup" id="O09108">
    <property type="interactions" value="90"/>
</dbReference>
<dbReference type="STRING" id="10090.ENSMUSP00000072276"/>
<dbReference type="GlyCosmos" id="O09108">
    <property type="glycosylation" value="1 site, No reported glycans"/>
</dbReference>
<dbReference type="GlyGen" id="O09108">
    <property type="glycosylation" value="1 site"/>
</dbReference>
<dbReference type="PaxDb" id="10090-ENSMUSP00000072276"/>
<dbReference type="ProteomicsDB" id="293403"/>
<dbReference type="AGR" id="MGI:96782"/>
<dbReference type="MGI" id="MGI:96782">
    <property type="gene designation" value="Lhb"/>
</dbReference>
<dbReference type="eggNOG" id="ENOG502S49V">
    <property type="taxonomic scope" value="Eukaryota"/>
</dbReference>
<dbReference type="InParanoid" id="O09108"/>
<dbReference type="PhylomeDB" id="O09108"/>
<dbReference type="Reactome" id="R-MMU-193048">
    <property type="pathway name" value="Androgen biosynthesis"/>
</dbReference>
<dbReference type="Reactome" id="R-MMU-193993">
    <property type="pathway name" value="Mineralocorticoid biosynthesis"/>
</dbReference>
<dbReference type="Reactome" id="R-MMU-209822">
    <property type="pathway name" value="Glycoprotein hormones"/>
</dbReference>
<dbReference type="Reactome" id="R-MMU-375281">
    <property type="pathway name" value="Hormone ligand-binding receptors"/>
</dbReference>
<dbReference type="Reactome" id="R-MMU-418555">
    <property type="pathway name" value="G alpha (s) signalling events"/>
</dbReference>
<dbReference type="Reactome" id="R-MMU-8866910">
    <property type="pathway name" value="TFAP2 (AP-2) family regulates transcription of growth factors and their receptors"/>
</dbReference>
<dbReference type="Reactome" id="R-MMU-975578">
    <property type="pathway name" value="Reactions specific to the complex N-glycan synthesis pathway"/>
</dbReference>
<dbReference type="ChiTaRS" id="Lhb">
    <property type="organism name" value="mouse"/>
</dbReference>
<dbReference type="PRO" id="PR:O09108"/>
<dbReference type="Proteomes" id="UP000000589">
    <property type="component" value="Unplaced"/>
</dbReference>
<dbReference type="RNAct" id="O09108">
    <property type="molecule type" value="protein"/>
</dbReference>
<dbReference type="GO" id="GO:0005737">
    <property type="term" value="C:cytoplasm"/>
    <property type="evidence" value="ECO:0000314"/>
    <property type="project" value="MGI"/>
</dbReference>
<dbReference type="GO" id="GO:0005576">
    <property type="term" value="C:extracellular region"/>
    <property type="evidence" value="ECO:0007669"/>
    <property type="project" value="UniProtKB-SubCell"/>
</dbReference>
<dbReference type="GO" id="GO:0005179">
    <property type="term" value="F:hormone activity"/>
    <property type="evidence" value="ECO:0007669"/>
    <property type="project" value="UniProtKB-KW"/>
</dbReference>
<dbReference type="GO" id="GO:0035471">
    <property type="term" value="P:luteinizing hormone signaling pathway involved in ovarian follicle development"/>
    <property type="evidence" value="ECO:0000314"/>
    <property type="project" value="MGI"/>
</dbReference>
<dbReference type="CDD" id="cd00069">
    <property type="entry name" value="GHB_like"/>
    <property type="match status" value="1"/>
</dbReference>
<dbReference type="FunFam" id="2.10.90.10:FF:000007">
    <property type="entry name" value="Luteinizing hormone beta subunit"/>
    <property type="match status" value="1"/>
</dbReference>
<dbReference type="Gene3D" id="2.10.90.10">
    <property type="entry name" value="Cystine-knot cytokines"/>
    <property type="match status" value="1"/>
</dbReference>
<dbReference type="InterPro" id="IPR029034">
    <property type="entry name" value="Cystine-knot_cytokine"/>
</dbReference>
<dbReference type="InterPro" id="IPR006208">
    <property type="entry name" value="Glyco_hormone_CN"/>
</dbReference>
<dbReference type="InterPro" id="IPR001545">
    <property type="entry name" value="Gonadotropin_bsu"/>
</dbReference>
<dbReference type="InterPro" id="IPR018245">
    <property type="entry name" value="Gonadotropin_bsu_CS"/>
</dbReference>
<dbReference type="PANTHER" id="PTHR11515">
    <property type="entry name" value="GLYCOPROTEIN HORMONE BETA CHAIN"/>
    <property type="match status" value="1"/>
</dbReference>
<dbReference type="PANTHER" id="PTHR11515:SF11">
    <property type="entry name" value="LUTROPIN SUBUNIT BETA"/>
    <property type="match status" value="1"/>
</dbReference>
<dbReference type="Pfam" id="PF00007">
    <property type="entry name" value="Cys_knot"/>
    <property type="match status" value="1"/>
</dbReference>
<dbReference type="SMART" id="SM00068">
    <property type="entry name" value="GHB"/>
    <property type="match status" value="1"/>
</dbReference>
<dbReference type="SUPFAM" id="SSF57501">
    <property type="entry name" value="Cystine-knot cytokines"/>
    <property type="match status" value="1"/>
</dbReference>
<dbReference type="PROSITE" id="PS00261">
    <property type="entry name" value="GLYCO_HORMONE_BETA_1"/>
    <property type="match status" value="1"/>
</dbReference>
<dbReference type="PROSITE" id="PS00689">
    <property type="entry name" value="GLYCO_HORMONE_BETA_2"/>
    <property type="match status" value="1"/>
</dbReference>
<keyword id="KW-1015">Disulfide bond</keyword>
<keyword id="KW-0325">Glycoprotein</keyword>
<keyword id="KW-0372">Hormone</keyword>
<keyword id="KW-1185">Reference proteome</keyword>
<keyword id="KW-0964">Secreted</keyword>
<keyword id="KW-0732">Signal</keyword>